<keyword id="KW-1185">Reference proteome</keyword>
<keyword id="KW-0687">Ribonucleoprotein</keyword>
<keyword id="KW-0689">Ribosomal protein</keyword>
<keyword id="KW-0694">RNA-binding</keyword>
<keyword id="KW-0699">rRNA-binding</keyword>
<comment type="function">
    <text evidence="1">Binds to the 23S rRNA.</text>
</comment>
<comment type="subunit">
    <text evidence="1">Part of the 50S ribosomal subunit.</text>
</comment>
<comment type="similarity">
    <text evidence="1">Belongs to the universal ribosomal protein uL15 family.</text>
</comment>
<accession>Q890Q3</accession>
<protein>
    <recommendedName>
        <fullName evidence="1">Large ribosomal subunit protein uL15</fullName>
    </recommendedName>
    <alternativeName>
        <fullName evidence="3">50S ribosomal protein L15</fullName>
    </alternativeName>
</protein>
<proteinExistence type="inferred from homology"/>
<reference key="1">
    <citation type="journal article" date="2003" name="Proc. Natl. Acad. Sci. U.S.A.">
        <title>The genome sequence of Clostridium tetani, the causative agent of tetanus disease.</title>
        <authorList>
            <person name="Brueggemann H."/>
            <person name="Baeumer S."/>
            <person name="Fricke W.F."/>
            <person name="Wiezer A."/>
            <person name="Liesegang H."/>
            <person name="Decker I."/>
            <person name="Herzberg C."/>
            <person name="Martinez-Arias R."/>
            <person name="Merkl R."/>
            <person name="Henne A."/>
            <person name="Gottschalk G."/>
        </authorList>
    </citation>
    <scope>NUCLEOTIDE SEQUENCE [LARGE SCALE GENOMIC DNA]</scope>
    <source>
        <strain>Massachusetts / E88</strain>
    </source>
</reference>
<feature type="chain" id="PRO_0000104707" description="Large ribosomal subunit protein uL15">
    <location>
        <begin position="1"/>
        <end position="146"/>
    </location>
</feature>
<feature type="region of interest" description="Disordered" evidence="2">
    <location>
        <begin position="1"/>
        <end position="55"/>
    </location>
</feature>
<feature type="compositionally biased region" description="Basic and acidic residues" evidence="2">
    <location>
        <begin position="1"/>
        <end position="13"/>
    </location>
</feature>
<feature type="compositionally biased region" description="Gly residues" evidence="2">
    <location>
        <begin position="42"/>
        <end position="52"/>
    </location>
</feature>
<dbReference type="EMBL" id="AE015927">
    <property type="protein sequence ID" value="AAO37042.1"/>
    <property type="molecule type" value="Genomic_DNA"/>
</dbReference>
<dbReference type="RefSeq" id="WP_011100703.1">
    <property type="nucleotide sequence ID" value="NC_004557.1"/>
</dbReference>
<dbReference type="SMR" id="Q890Q3"/>
<dbReference type="STRING" id="212717.CTC_02585"/>
<dbReference type="GeneID" id="24252858"/>
<dbReference type="KEGG" id="ctc:CTC_02585"/>
<dbReference type="HOGENOM" id="CLU_055188_4_2_9"/>
<dbReference type="OrthoDB" id="9810293at2"/>
<dbReference type="Proteomes" id="UP000001412">
    <property type="component" value="Chromosome"/>
</dbReference>
<dbReference type="GO" id="GO:0022625">
    <property type="term" value="C:cytosolic large ribosomal subunit"/>
    <property type="evidence" value="ECO:0007669"/>
    <property type="project" value="TreeGrafter"/>
</dbReference>
<dbReference type="GO" id="GO:0019843">
    <property type="term" value="F:rRNA binding"/>
    <property type="evidence" value="ECO:0007669"/>
    <property type="project" value="UniProtKB-UniRule"/>
</dbReference>
<dbReference type="GO" id="GO:0003735">
    <property type="term" value="F:structural constituent of ribosome"/>
    <property type="evidence" value="ECO:0007669"/>
    <property type="project" value="InterPro"/>
</dbReference>
<dbReference type="GO" id="GO:0006412">
    <property type="term" value="P:translation"/>
    <property type="evidence" value="ECO:0007669"/>
    <property type="project" value="UniProtKB-UniRule"/>
</dbReference>
<dbReference type="Gene3D" id="3.100.10.10">
    <property type="match status" value="1"/>
</dbReference>
<dbReference type="HAMAP" id="MF_01341">
    <property type="entry name" value="Ribosomal_uL15"/>
    <property type="match status" value="1"/>
</dbReference>
<dbReference type="InterPro" id="IPR030878">
    <property type="entry name" value="Ribosomal_uL15"/>
</dbReference>
<dbReference type="InterPro" id="IPR021131">
    <property type="entry name" value="Ribosomal_uL15/eL18"/>
</dbReference>
<dbReference type="InterPro" id="IPR036227">
    <property type="entry name" value="Ribosomal_uL15/eL18_sf"/>
</dbReference>
<dbReference type="InterPro" id="IPR005749">
    <property type="entry name" value="Ribosomal_uL15_bac-type"/>
</dbReference>
<dbReference type="InterPro" id="IPR001196">
    <property type="entry name" value="Ribosomal_uL15_CS"/>
</dbReference>
<dbReference type="NCBIfam" id="TIGR01071">
    <property type="entry name" value="rplO_bact"/>
    <property type="match status" value="1"/>
</dbReference>
<dbReference type="PANTHER" id="PTHR12934">
    <property type="entry name" value="50S RIBOSOMAL PROTEIN L15"/>
    <property type="match status" value="1"/>
</dbReference>
<dbReference type="PANTHER" id="PTHR12934:SF11">
    <property type="entry name" value="LARGE RIBOSOMAL SUBUNIT PROTEIN UL15M"/>
    <property type="match status" value="1"/>
</dbReference>
<dbReference type="Pfam" id="PF00828">
    <property type="entry name" value="Ribosomal_L27A"/>
    <property type="match status" value="1"/>
</dbReference>
<dbReference type="SUPFAM" id="SSF52080">
    <property type="entry name" value="Ribosomal proteins L15p and L18e"/>
    <property type="match status" value="1"/>
</dbReference>
<dbReference type="PROSITE" id="PS00475">
    <property type="entry name" value="RIBOSOMAL_L15"/>
    <property type="match status" value="1"/>
</dbReference>
<sequence>MKLHELRPAEGSRKSPKRVGRGTGSGLGKTSARGENGQNSRSGGGVRPGFEGGQMPLYRRLPKRGFTNIFAKKYTAINIDRLNIFEDDTVVTPELLIEKGVISKVYDGVKILGNGELDKKLIVKATKFSKAAAEKIEAAGGKVEVI</sequence>
<name>RL15_CLOTE</name>
<gene>
    <name evidence="1" type="primary">rplO</name>
    <name type="ordered locus">CTC_02585</name>
</gene>
<evidence type="ECO:0000255" key="1">
    <source>
        <dbReference type="HAMAP-Rule" id="MF_01341"/>
    </source>
</evidence>
<evidence type="ECO:0000256" key="2">
    <source>
        <dbReference type="SAM" id="MobiDB-lite"/>
    </source>
</evidence>
<evidence type="ECO:0000305" key="3"/>
<organism>
    <name type="scientific">Clostridium tetani (strain Massachusetts / E88)</name>
    <dbReference type="NCBI Taxonomy" id="212717"/>
    <lineage>
        <taxon>Bacteria</taxon>
        <taxon>Bacillati</taxon>
        <taxon>Bacillota</taxon>
        <taxon>Clostridia</taxon>
        <taxon>Eubacteriales</taxon>
        <taxon>Clostridiaceae</taxon>
        <taxon>Clostridium</taxon>
    </lineage>
</organism>